<sequence>MIEVSAVAGYTPSVEISLTPREAPQMTKKLFVKTYGCQMNVYDSERMAEALGGEGYEQVNTPEGADMILLNTCHIREKAAEKMYSELGRLRPLRDANPDLKIGVAGCVAQAEGEEIMRRQPLVDLVVGPQTYHRLPKMMEAVNAGEKALDTDFPEEDKFLNLPKARATRGPTAFLTVQEGCDKFCAFCVVPYTRGAEVSRSAERLMAEARDLVDRGVREITLLGQNVNAYHGAGDGGTWGLARLIREMAKIDGLDRIRFTTSHPNDMEDDLIAAHGDCPELMPYLHLPVQAGSDKILKAMNRKHTAADYIRLIDRIRDARPDLHLSGDFIVGFPGETEEDFQATLDLVETVGYGTAYSFKYSARPGTPAAERTGQVSEAEASDRLQRLQALLTQQQRAAQDAMVGRRVKVLFEKPGRNPGQMIGKSEYLHSVHVDGPDTLRGQIAEVEIAESKTNSLTGRLV</sequence>
<dbReference type="EC" id="2.8.4.3" evidence="1"/>
<dbReference type="EMBL" id="CP000264">
    <property type="protein sequence ID" value="ABD53614.1"/>
    <property type="molecule type" value="Genomic_DNA"/>
</dbReference>
<dbReference type="SMR" id="Q28UJ8"/>
<dbReference type="STRING" id="290400.Jann_0697"/>
<dbReference type="KEGG" id="jan:Jann_0697"/>
<dbReference type="eggNOG" id="COG0621">
    <property type="taxonomic scope" value="Bacteria"/>
</dbReference>
<dbReference type="HOGENOM" id="CLU_018697_2_2_5"/>
<dbReference type="OrthoDB" id="9805215at2"/>
<dbReference type="Proteomes" id="UP000008326">
    <property type="component" value="Chromosome"/>
</dbReference>
<dbReference type="GO" id="GO:0005829">
    <property type="term" value="C:cytosol"/>
    <property type="evidence" value="ECO:0007669"/>
    <property type="project" value="TreeGrafter"/>
</dbReference>
<dbReference type="GO" id="GO:0051539">
    <property type="term" value="F:4 iron, 4 sulfur cluster binding"/>
    <property type="evidence" value="ECO:0007669"/>
    <property type="project" value="UniProtKB-UniRule"/>
</dbReference>
<dbReference type="GO" id="GO:0046872">
    <property type="term" value="F:metal ion binding"/>
    <property type="evidence" value="ECO:0007669"/>
    <property type="project" value="UniProtKB-KW"/>
</dbReference>
<dbReference type="GO" id="GO:0035597">
    <property type="term" value="F:N6-isopentenyladenosine methylthiotransferase activity"/>
    <property type="evidence" value="ECO:0007669"/>
    <property type="project" value="TreeGrafter"/>
</dbReference>
<dbReference type="CDD" id="cd01335">
    <property type="entry name" value="Radical_SAM"/>
    <property type="match status" value="1"/>
</dbReference>
<dbReference type="FunFam" id="3.40.50.12160:FF:000001">
    <property type="entry name" value="tRNA-2-methylthio-N(6)-dimethylallyladenosine synthase"/>
    <property type="match status" value="1"/>
</dbReference>
<dbReference type="FunFam" id="3.80.30.20:FF:000001">
    <property type="entry name" value="tRNA-2-methylthio-N(6)-dimethylallyladenosine synthase 2"/>
    <property type="match status" value="1"/>
</dbReference>
<dbReference type="Gene3D" id="3.40.50.12160">
    <property type="entry name" value="Methylthiotransferase, N-terminal domain"/>
    <property type="match status" value="1"/>
</dbReference>
<dbReference type="Gene3D" id="3.80.30.20">
    <property type="entry name" value="tm_1862 like domain"/>
    <property type="match status" value="1"/>
</dbReference>
<dbReference type="HAMAP" id="MF_01864">
    <property type="entry name" value="tRNA_metthiotr_MiaB"/>
    <property type="match status" value="1"/>
</dbReference>
<dbReference type="InterPro" id="IPR006638">
    <property type="entry name" value="Elp3/MiaA/NifB-like_rSAM"/>
</dbReference>
<dbReference type="InterPro" id="IPR005839">
    <property type="entry name" value="Methylthiotransferase"/>
</dbReference>
<dbReference type="InterPro" id="IPR020612">
    <property type="entry name" value="Methylthiotransferase_CS"/>
</dbReference>
<dbReference type="InterPro" id="IPR013848">
    <property type="entry name" value="Methylthiotransferase_N"/>
</dbReference>
<dbReference type="InterPro" id="IPR038135">
    <property type="entry name" value="Methylthiotransferase_N_sf"/>
</dbReference>
<dbReference type="InterPro" id="IPR006463">
    <property type="entry name" value="MiaB_methiolase"/>
</dbReference>
<dbReference type="InterPro" id="IPR007197">
    <property type="entry name" value="rSAM"/>
</dbReference>
<dbReference type="InterPro" id="IPR023404">
    <property type="entry name" value="rSAM_horseshoe"/>
</dbReference>
<dbReference type="InterPro" id="IPR002792">
    <property type="entry name" value="TRAM_dom"/>
</dbReference>
<dbReference type="NCBIfam" id="TIGR01574">
    <property type="entry name" value="miaB-methiolase"/>
    <property type="match status" value="1"/>
</dbReference>
<dbReference type="NCBIfam" id="TIGR00089">
    <property type="entry name" value="MiaB/RimO family radical SAM methylthiotransferase"/>
    <property type="match status" value="1"/>
</dbReference>
<dbReference type="PANTHER" id="PTHR43020">
    <property type="entry name" value="CDK5 REGULATORY SUBUNIT-ASSOCIATED PROTEIN 1"/>
    <property type="match status" value="1"/>
</dbReference>
<dbReference type="PANTHER" id="PTHR43020:SF2">
    <property type="entry name" value="MITOCHONDRIAL TRNA METHYLTHIOTRANSFERASE CDK5RAP1"/>
    <property type="match status" value="1"/>
</dbReference>
<dbReference type="Pfam" id="PF04055">
    <property type="entry name" value="Radical_SAM"/>
    <property type="match status" value="1"/>
</dbReference>
<dbReference type="Pfam" id="PF01938">
    <property type="entry name" value="TRAM"/>
    <property type="match status" value="1"/>
</dbReference>
<dbReference type="Pfam" id="PF00919">
    <property type="entry name" value="UPF0004"/>
    <property type="match status" value="1"/>
</dbReference>
<dbReference type="SFLD" id="SFLDF00273">
    <property type="entry name" value="(dimethylallyl)adenosine_tRNA"/>
    <property type="match status" value="1"/>
</dbReference>
<dbReference type="SFLD" id="SFLDG01082">
    <property type="entry name" value="B12-binding_domain_containing"/>
    <property type="match status" value="1"/>
</dbReference>
<dbReference type="SFLD" id="SFLDG01061">
    <property type="entry name" value="methylthiotransferase"/>
    <property type="match status" value="1"/>
</dbReference>
<dbReference type="SMART" id="SM00729">
    <property type="entry name" value="Elp3"/>
    <property type="match status" value="1"/>
</dbReference>
<dbReference type="SUPFAM" id="SSF102114">
    <property type="entry name" value="Radical SAM enzymes"/>
    <property type="match status" value="1"/>
</dbReference>
<dbReference type="PROSITE" id="PS51449">
    <property type="entry name" value="MTTASE_N"/>
    <property type="match status" value="1"/>
</dbReference>
<dbReference type="PROSITE" id="PS01278">
    <property type="entry name" value="MTTASE_RADICAL"/>
    <property type="match status" value="1"/>
</dbReference>
<dbReference type="PROSITE" id="PS51918">
    <property type="entry name" value="RADICAL_SAM"/>
    <property type="match status" value="1"/>
</dbReference>
<dbReference type="PROSITE" id="PS50926">
    <property type="entry name" value="TRAM"/>
    <property type="match status" value="1"/>
</dbReference>
<keyword id="KW-0004">4Fe-4S</keyword>
<keyword id="KW-0963">Cytoplasm</keyword>
<keyword id="KW-0408">Iron</keyword>
<keyword id="KW-0411">Iron-sulfur</keyword>
<keyword id="KW-0479">Metal-binding</keyword>
<keyword id="KW-1185">Reference proteome</keyword>
<keyword id="KW-0949">S-adenosyl-L-methionine</keyword>
<keyword id="KW-0808">Transferase</keyword>
<keyword id="KW-0819">tRNA processing</keyword>
<comment type="function">
    <text evidence="1">Catalyzes the methylthiolation of N6-(dimethylallyl)adenosine (i(6)A), leading to the formation of 2-methylthio-N6-(dimethylallyl)adenosine (ms(2)i(6)A) at position 37 in tRNAs that read codons beginning with uridine.</text>
</comment>
<comment type="catalytic activity">
    <reaction evidence="1">
        <text>N(6)-dimethylallyladenosine(37) in tRNA + (sulfur carrier)-SH + AH2 + 2 S-adenosyl-L-methionine = 2-methylsulfanyl-N(6)-dimethylallyladenosine(37) in tRNA + (sulfur carrier)-H + 5'-deoxyadenosine + L-methionine + A + S-adenosyl-L-homocysteine + 2 H(+)</text>
        <dbReference type="Rhea" id="RHEA:37067"/>
        <dbReference type="Rhea" id="RHEA-COMP:10375"/>
        <dbReference type="Rhea" id="RHEA-COMP:10376"/>
        <dbReference type="Rhea" id="RHEA-COMP:14737"/>
        <dbReference type="Rhea" id="RHEA-COMP:14739"/>
        <dbReference type="ChEBI" id="CHEBI:13193"/>
        <dbReference type="ChEBI" id="CHEBI:15378"/>
        <dbReference type="ChEBI" id="CHEBI:17319"/>
        <dbReference type="ChEBI" id="CHEBI:17499"/>
        <dbReference type="ChEBI" id="CHEBI:29917"/>
        <dbReference type="ChEBI" id="CHEBI:57844"/>
        <dbReference type="ChEBI" id="CHEBI:57856"/>
        <dbReference type="ChEBI" id="CHEBI:59789"/>
        <dbReference type="ChEBI" id="CHEBI:64428"/>
        <dbReference type="ChEBI" id="CHEBI:74415"/>
        <dbReference type="ChEBI" id="CHEBI:74417"/>
        <dbReference type="EC" id="2.8.4.3"/>
    </reaction>
</comment>
<comment type="cofactor">
    <cofactor evidence="1">
        <name>[4Fe-4S] cluster</name>
        <dbReference type="ChEBI" id="CHEBI:49883"/>
    </cofactor>
    <text evidence="1">Binds 2 [4Fe-4S] clusters. One cluster is coordinated with 3 cysteines and an exchangeable S-adenosyl-L-methionine.</text>
</comment>
<comment type="subunit">
    <text evidence="1">Monomer.</text>
</comment>
<comment type="subcellular location">
    <subcellularLocation>
        <location evidence="1">Cytoplasm</location>
    </subcellularLocation>
</comment>
<comment type="similarity">
    <text evidence="1">Belongs to the methylthiotransferase family. MiaB subfamily.</text>
</comment>
<evidence type="ECO:0000255" key="1">
    <source>
        <dbReference type="HAMAP-Rule" id="MF_01864"/>
    </source>
</evidence>
<evidence type="ECO:0000255" key="2">
    <source>
        <dbReference type="PROSITE-ProRule" id="PRU01266"/>
    </source>
</evidence>
<name>MIAB_JANSC</name>
<feature type="chain" id="PRO_0000374346" description="tRNA-2-methylthio-N(6)-dimethylallyladenosine synthase">
    <location>
        <begin position="1"/>
        <end position="462"/>
    </location>
</feature>
<feature type="domain" description="MTTase N-terminal" evidence="1">
    <location>
        <begin position="28"/>
        <end position="144"/>
    </location>
</feature>
<feature type="domain" description="Radical SAM core" evidence="2">
    <location>
        <begin position="167"/>
        <end position="398"/>
    </location>
</feature>
<feature type="domain" description="TRAM" evidence="1">
    <location>
        <begin position="401"/>
        <end position="462"/>
    </location>
</feature>
<feature type="binding site" evidence="1">
    <location>
        <position position="37"/>
    </location>
    <ligand>
        <name>[4Fe-4S] cluster</name>
        <dbReference type="ChEBI" id="CHEBI:49883"/>
        <label>1</label>
    </ligand>
</feature>
<feature type="binding site" evidence="1">
    <location>
        <position position="73"/>
    </location>
    <ligand>
        <name>[4Fe-4S] cluster</name>
        <dbReference type="ChEBI" id="CHEBI:49883"/>
        <label>1</label>
    </ligand>
</feature>
<feature type="binding site" evidence="1">
    <location>
        <position position="107"/>
    </location>
    <ligand>
        <name>[4Fe-4S] cluster</name>
        <dbReference type="ChEBI" id="CHEBI:49883"/>
        <label>1</label>
    </ligand>
</feature>
<feature type="binding site" evidence="1">
    <location>
        <position position="181"/>
    </location>
    <ligand>
        <name>[4Fe-4S] cluster</name>
        <dbReference type="ChEBI" id="CHEBI:49883"/>
        <label>2</label>
        <note>4Fe-4S-S-AdoMet</note>
    </ligand>
</feature>
<feature type="binding site" evidence="1">
    <location>
        <position position="185"/>
    </location>
    <ligand>
        <name>[4Fe-4S] cluster</name>
        <dbReference type="ChEBI" id="CHEBI:49883"/>
        <label>2</label>
        <note>4Fe-4S-S-AdoMet</note>
    </ligand>
</feature>
<feature type="binding site" evidence="1">
    <location>
        <position position="188"/>
    </location>
    <ligand>
        <name>[4Fe-4S] cluster</name>
        <dbReference type="ChEBI" id="CHEBI:49883"/>
        <label>2</label>
        <note>4Fe-4S-S-AdoMet</note>
    </ligand>
</feature>
<reference key="1">
    <citation type="submission" date="2006-02" db="EMBL/GenBank/DDBJ databases">
        <title>Complete sequence of chromosome of Jannaschia sp. CCS1.</title>
        <authorList>
            <consortium name="US DOE Joint Genome Institute"/>
            <person name="Copeland A."/>
            <person name="Lucas S."/>
            <person name="Lapidus A."/>
            <person name="Barry K."/>
            <person name="Detter J.C."/>
            <person name="Glavina del Rio T."/>
            <person name="Hammon N."/>
            <person name="Israni S."/>
            <person name="Pitluck S."/>
            <person name="Brettin T."/>
            <person name="Bruce D."/>
            <person name="Han C."/>
            <person name="Tapia R."/>
            <person name="Gilna P."/>
            <person name="Chertkov O."/>
            <person name="Saunders E."/>
            <person name="Schmutz J."/>
            <person name="Larimer F."/>
            <person name="Land M."/>
            <person name="Kyrpides N."/>
            <person name="Lykidis A."/>
            <person name="Moran M.A."/>
            <person name="Belas R."/>
            <person name="Ye W."/>
            <person name="Buchan A."/>
            <person name="Gonzalez J.M."/>
            <person name="Schell M.A."/>
            <person name="Richardson P."/>
        </authorList>
    </citation>
    <scope>NUCLEOTIDE SEQUENCE [LARGE SCALE GENOMIC DNA]</scope>
    <source>
        <strain>CCS1</strain>
    </source>
</reference>
<gene>
    <name evidence="1" type="primary">miaB</name>
    <name type="ordered locus">Jann_0697</name>
</gene>
<protein>
    <recommendedName>
        <fullName evidence="1">tRNA-2-methylthio-N(6)-dimethylallyladenosine synthase</fullName>
        <ecNumber evidence="1">2.8.4.3</ecNumber>
    </recommendedName>
    <alternativeName>
        <fullName evidence="1">(Dimethylallyl)adenosine tRNA methylthiotransferase MiaB</fullName>
    </alternativeName>
    <alternativeName>
        <fullName evidence="1">tRNA-i(6)A37 methylthiotransferase</fullName>
    </alternativeName>
</protein>
<proteinExistence type="inferred from homology"/>
<organism>
    <name type="scientific">Jannaschia sp. (strain CCS1)</name>
    <dbReference type="NCBI Taxonomy" id="290400"/>
    <lineage>
        <taxon>Bacteria</taxon>
        <taxon>Pseudomonadati</taxon>
        <taxon>Pseudomonadota</taxon>
        <taxon>Alphaproteobacteria</taxon>
        <taxon>Rhodobacterales</taxon>
        <taxon>Roseobacteraceae</taxon>
        <taxon>Jannaschia</taxon>
    </lineage>
</organism>
<accession>Q28UJ8</accession>